<dbReference type="EC" id="2.4.2.18" evidence="1"/>
<dbReference type="EMBL" id="CR522870">
    <property type="protein sequence ID" value="CAG36350.1"/>
    <property type="molecule type" value="Genomic_DNA"/>
</dbReference>
<dbReference type="SMR" id="Q6AMS5"/>
<dbReference type="STRING" id="177439.DP1621"/>
<dbReference type="KEGG" id="dps:DP1621"/>
<dbReference type="eggNOG" id="COG0547">
    <property type="taxonomic scope" value="Bacteria"/>
</dbReference>
<dbReference type="HOGENOM" id="CLU_034315_2_1_7"/>
<dbReference type="UniPathway" id="UPA00035">
    <property type="reaction ID" value="UER00041"/>
</dbReference>
<dbReference type="Proteomes" id="UP000000602">
    <property type="component" value="Chromosome"/>
</dbReference>
<dbReference type="GO" id="GO:0005829">
    <property type="term" value="C:cytosol"/>
    <property type="evidence" value="ECO:0007669"/>
    <property type="project" value="TreeGrafter"/>
</dbReference>
<dbReference type="GO" id="GO:0004048">
    <property type="term" value="F:anthranilate phosphoribosyltransferase activity"/>
    <property type="evidence" value="ECO:0007669"/>
    <property type="project" value="UniProtKB-UniRule"/>
</dbReference>
<dbReference type="GO" id="GO:0000287">
    <property type="term" value="F:magnesium ion binding"/>
    <property type="evidence" value="ECO:0007669"/>
    <property type="project" value="UniProtKB-UniRule"/>
</dbReference>
<dbReference type="GO" id="GO:0000162">
    <property type="term" value="P:L-tryptophan biosynthetic process"/>
    <property type="evidence" value="ECO:0007669"/>
    <property type="project" value="UniProtKB-UniRule"/>
</dbReference>
<dbReference type="FunFam" id="3.40.1030.10:FF:000002">
    <property type="entry name" value="Anthranilate phosphoribosyltransferase"/>
    <property type="match status" value="1"/>
</dbReference>
<dbReference type="Gene3D" id="3.40.1030.10">
    <property type="entry name" value="Nucleoside phosphorylase/phosphoribosyltransferase catalytic domain"/>
    <property type="match status" value="1"/>
</dbReference>
<dbReference type="Gene3D" id="1.20.970.10">
    <property type="entry name" value="Transferase, Pyrimidine Nucleoside Phosphorylase, Chain C"/>
    <property type="match status" value="1"/>
</dbReference>
<dbReference type="HAMAP" id="MF_00211">
    <property type="entry name" value="TrpD"/>
    <property type="match status" value="1"/>
</dbReference>
<dbReference type="InterPro" id="IPR005940">
    <property type="entry name" value="Anthranilate_Pribosyl_Tfrase"/>
</dbReference>
<dbReference type="InterPro" id="IPR000312">
    <property type="entry name" value="Glycosyl_Trfase_fam3"/>
</dbReference>
<dbReference type="InterPro" id="IPR017459">
    <property type="entry name" value="Glycosyl_Trfase_fam3_N_dom"/>
</dbReference>
<dbReference type="InterPro" id="IPR036320">
    <property type="entry name" value="Glycosyl_Trfase_fam3_N_dom_sf"/>
</dbReference>
<dbReference type="InterPro" id="IPR035902">
    <property type="entry name" value="Nuc_phospho_transferase"/>
</dbReference>
<dbReference type="NCBIfam" id="TIGR01245">
    <property type="entry name" value="trpD"/>
    <property type="match status" value="1"/>
</dbReference>
<dbReference type="PANTHER" id="PTHR43285">
    <property type="entry name" value="ANTHRANILATE PHOSPHORIBOSYLTRANSFERASE"/>
    <property type="match status" value="1"/>
</dbReference>
<dbReference type="PANTHER" id="PTHR43285:SF2">
    <property type="entry name" value="ANTHRANILATE PHOSPHORIBOSYLTRANSFERASE"/>
    <property type="match status" value="1"/>
</dbReference>
<dbReference type="Pfam" id="PF02885">
    <property type="entry name" value="Glycos_trans_3N"/>
    <property type="match status" value="1"/>
</dbReference>
<dbReference type="Pfam" id="PF00591">
    <property type="entry name" value="Glycos_transf_3"/>
    <property type="match status" value="1"/>
</dbReference>
<dbReference type="SUPFAM" id="SSF52418">
    <property type="entry name" value="Nucleoside phosphorylase/phosphoribosyltransferase catalytic domain"/>
    <property type="match status" value="1"/>
</dbReference>
<dbReference type="SUPFAM" id="SSF47648">
    <property type="entry name" value="Nucleoside phosphorylase/phosphoribosyltransferase N-terminal domain"/>
    <property type="match status" value="1"/>
</dbReference>
<proteinExistence type="inferred from homology"/>
<comment type="function">
    <text evidence="1">Catalyzes the transfer of the phosphoribosyl group of 5-phosphorylribose-1-pyrophosphate (PRPP) to anthranilate to yield N-(5'-phosphoribosyl)-anthranilate (PRA).</text>
</comment>
<comment type="catalytic activity">
    <reaction evidence="1">
        <text>N-(5-phospho-beta-D-ribosyl)anthranilate + diphosphate = 5-phospho-alpha-D-ribose 1-diphosphate + anthranilate</text>
        <dbReference type="Rhea" id="RHEA:11768"/>
        <dbReference type="ChEBI" id="CHEBI:16567"/>
        <dbReference type="ChEBI" id="CHEBI:18277"/>
        <dbReference type="ChEBI" id="CHEBI:33019"/>
        <dbReference type="ChEBI" id="CHEBI:58017"/>
        <dbReference type="EC" id="2.4.2.18"/>
    </reaction>
</comment>
<comment type="cofactor">
    <cofactor evidence="1">
        <name>Mg(2+)</name>
        <dbReference type="ChEBI" id="CHEBI:18420"/>
    </cofactor>
    <text evidence="1">Binds 2 magnesium ions per monomer.</text>
</comment>
<comment type="pathway">
    <text evidence="1">Amino-acid biosynthesis; L-tryptophan biosynthesis; L-tryptophan from chorismate: step 2/5.</text>
</comment>
<comment type="subunit">
    <text evidence="1">Homodimer.</text>
</comment>
<comment type="similarity">
    <text evidence="1">Belongs to the anthranilate phosphoribosyltransferase family.</text>
</comment>
<sequence>MAVTLGKNNMNIRQAIARVVTGADLSESEMMASMEEVMSGQASPAQIASFITALRMKGEAVEEIVGAVRVMRDKATFIDCGLGPDDILMDIVGTGGDGADTFNVSTTTSFVVAAAGVAVAKHGNRAVSSRCGSADVLEALGVDLSLDPATVARSVQEIGIGFLFAPLLHAAMKHAIVPRREMGIRTIFNILGPLTNPAGANVQLIGVFERSLTTVLAEVLLRLGERRSLVVWGEGNMDEMTVTGTSYIADAHDGRVTSYAVEPEDVGLARAAVADISGGRTPEESAQQVRAVLAGEKGARLDMVLLNAGAALLAAGRVETIVEGVVMARDVVESGAALKKLGQLVAFR</sequence>
<accession>Q6AMS5</accession>
<keyword id="KW-0028">Amino-acid biosynthesis</keyword>
<keyword id="KW-0057">Aromatic amino acid biosynthesis</keyword>
<keyword id="KW-0328">Glycosyltransferase</keyword>
<keyword id="KW-0460">Magnesium</keyword>
<keyword id="KW-0479">Metal-binding</keyword>
<keyword id="KW-1185">Reference proteome</keyword>
<keyword id="KW-0808">Transferase</keyword>
<keyword id="KW-0822">Tryptophan biosynthesis</keyword>
<gene>
    <name evidence="1" type="primary">trpD</name>
    <name type="ordered locus">DP1621</name>
</gene>
<name>TRPD_DESPS</name>
<reference key="1">
    <citation type="journal article" date="2004" name="Environ. Microbiol.">
        <title>The genome of Desulfotalea psychrophila, a sulfate-reducing bacterium from permanently cold Arctic sediments.</title>
        <authorList>
            <person name="Rabus R."/>
            <person name="Ruepp A."/>
            <person name="Frickey T."/>
            <person name="Rattei T."/>
            <person name="Fartmann B."/>
            <person name="Stark M."/>
            <person name="Bauer M."/>
            <person name="Zibat A."/>
            <person name="Lombardot T."/>
            <person name="Becker I."/>
            <person name="Amann J."/>
            <person name="Gellner K."/>
            <person name="Teeling H."/>
            <person name="Leuschner W.D."/>
            <person name="Gloeckner F.-O."/>
            <person name="Lupas A.N."/>
            <person name="Amann R."/>
            <person name="Klenk H.-P."/>
        </authorList>
    </citation>
    <scope>NUCLEOTIDE SEQUENCE [LARGE SCALE GENOMIC DNA]</scope>
    <source>
        <strain>DSM 12343 / LSv54</strain>
    </source>
</reference>
<evidence type="ECO:0000255" key="1">
    <source>
        <dbReference type="HAMAP-Rule" id="MF_00211"/>
    </source>
</evidence>
<organism>
    <name type="scientific">Desulfotalea psychrophila (strain LSv54 / DSM 12343)</name>
    <dbReference type="NCBI Taxonomy" id="177439"/>
    <lineage>
        <taxon>Bacteria</taxon>
        <taxon>Pseudomonadati</taxon>
        <taxon>Thermodesulfobacteriota</taxon>
        <taxon>Desulfobulbia</taxon>
        <taxon>Desulfobulbales</taxon>
        <taxon>Desulfocapsaceae</taxon>
        <taxon>Desulfotalea</taxon>
    </lineage>
</organism>
<protein>
    <recommendedName>
        <fullName evidence="1">Anthranilate phosphoribosyltransferase</fullName>
        <ecNumber evidence="1">2.4.2.18</ecNumber>
    </recommendedName>
</protein>
<feature type="chain" id="PRO_0000227155" description="Anthranilate phosphoribosyltransferase">
    <location>
        <begin position="1"/>
        <end position="348"/>
    </location>
</feature>
<feature type="binding site" evidence="1">
    <location>
        <position position="93"/>
    </location>
    <ligand>
        <name>5-phospho-alpha-D-ribose 1-diphosphate</name>
        <dbReference type="ChEBI" id="CHEBI:58017"/>
    </ligand>
</feature>
<feature type="binding site" evidence="1">
    <location>
        <position position="93"/>
    </location>
    <ligand>
        <name>anthranilate</name>
        <dbReference type="ChEBI" id="CHEBI:16567"/>
        <label>1</label>
    </ligand>
</feature>
<feature type="binding site" evidence="1">
    <location>
        <begin position="96"/>
        <end position="97"/>
    </location>
    <ligand>
        <name>5-phospho-alpha-D-ribose 1-diphosphate</name>
        <dbReference type="ChEBI" id="CHEBI:58017"/>
    </ligand>
</feature>
<feature type="binding site" evidence="1">
    <location>
        <position position="101"/>
    </location>
    <ligand>
        <name>5-phospho-alpha-D-ribose 1-diphosphate</name>
        <dbReference type="ChEBI" id="CHEBI:58017"/>
    </ligand>
</feature>
<feature type="binding site" evidence="1">
    <location>
        <begin position="103"/>
        <end position="106"/>
    </location>
    <ligand>
        <name>5-phospho-alpha-D-ribose 1-diphosphate</name>
        <dbReference type="ChEBI" id="CHEBI:58017"/>
    </ligand>
</feature>
<feature type="binding site" evidence="1">
    <location>
        <position position="105"/>
    </location>
    <ligand>
        <name>Mg(2+)</name>
        <dbReference type="ChEBI" id="CHEBI:18420"/>
        <label>1</label>
    </ligand>
</feature>
<feature type="binding site" evidence="1">
    <location>
        <begin position="121"/>
        <end position="129"/>
    </location>
    <ligand>
        <name>5-phospho-alpha-D-ribose 1-diphosphate</name>
        <dbReference type="ChEBI" id="CHEBI:58017"/>
    </ligand>
</feature>
<feature type="binding site" evidence="1">
    <location>
        <position position="124"/>
    </location>
    <ligand>
        <name>anthranilate</name>
        <dbReference type="ChEBI" id="CHEBI:16567"/>
        <label>1</label>
    </ligand>
</feature>
<feature type="binding site" evidence="1">
    <location>
        <position position="133"/>
    </location>
    <ligand>
        <name>5-phospho-alpha-D-ribose 1-diphosphate</name>
        <dbReference type="ChEBI" id="CHEBI:58017"/>
    </ligand>
</feature>
<feature type="binding site" evidence="1">
    <location>
        <position position="179"/>
    </location>
    <ligand>
        <name>anthranilate</name>
        <dbReference type="ChEBI" id="CHEBI:16567"/>
        <label>2</label>
    </ligand>
</feature>
<feature type="binding site" evidence="1">
    <location>
        <position position="238"/>
    </location>
    <ligand>
        <name>Mg(2+)</name>
        <dbReference type="ChEBI" id="CHEBI:18420"/>
        <label>2</label>
    </ligand>
</feature>
<feature type="binding site" evidence="1">
    <location>
        <position position="239"/>
    </location>
    <ligand>
        <name>Mg(2+)</name>
        <dbReference type="ChEBI" id="CHEBI:18420"/>
        <label>1</label>
    </ligand>
</feature>
<feature type="binding site" evidence="1">
    <location>
        <position position="239"/>
    </location>
    <ligand>
        <name>Mg(2+)</name>
        <dbReference type="ChEBI" id="CHEBI:18420"/>
        <label>2</label>
    </ligand>
</feature>